<protein>
    <recommendedName>
        <fullName>Fibrinogen alpha chain</fullName>
    </recommendedName>
    <component>
        <recommendedName>
            <fullName>Fibrinopeptide A</fullName>
        </recommendedName>
    </component>
</protein>
<gene>
    <name type="primary">FGA</name>
</gene>
<comment type="function">
    <text evidence="1">Cleaved by the protease thrombin to yield monomers which, together with fibrinogen beta (FGB) and fibrinogen gamma (FGG), polymerize to form an insoluble fibrin matrix. Fibrin has a major function in hemostasis as one of the primary components of blood clots. In addition, functions during the early stages of wound repair to stabilize the lesion and guide cell migration during re-epithelialization. Was originally thought to be essential for platelet aggregation, based on in vitro studies using anticoagulated blood. However, subsequent studies have shown that it is not absolutely required for thrombus formation in vivo. Enhances expression of SELP in activated platelets via an ITGB3-dependent pathway. Maternal fibrinogen is essential for successful pregnancy. Fibrin deposition is also associated with infection, where it protects against IFNG-mediated hemorrhage. May also facilitate the immune response via both innate and T-cell mediated pathways.</text>
</comment>
<comment type="subunit">
    <text evidence="2">Heterohexamer; disulfide linked. Contains 2 sets of 3 non-identical chains (alpha, beta and gamma). The 2 heterotrimers are in head to head conformation with the N-termini in a small central domain (By similarity).</text>
</comment>
<comment type="subcellular location">
    <subcellularLocation>
        <location>Secreted</location>
    </subcellularLocation>
</comment>
<comment type="domain">
    <text evidence="2">A long coiled coil structure formed by 3 polypeptide chains connects the central nodule to the C-terminal domains (distal nodules). The long C-terminal ends of the alpha chains fold back, contributing a fourth strand to the coiled coil structure.</text>
</comment>
<comment type="PTM">
    <text>Conversion of fibrinogen to fibrin is triggered by thrombin, which cleaves fibrinopeptides A and B from alpha and beta chains, and thus exposes the N-terminal polymerization sites responsible for the formation of the soft clot. The soft clot is converted into the hard clot by factor XIIIA which catalyzes the epsilon-(gamma-glutamyl)lysine cross-linking between gamma chains (stronger) and between alpha chains (weaker) of different monomers.</text>
</comment>
<comment type="PTM">
    <text>Forms F13A-mediated cross-links between a glutamine and the epsilon-amino group of a lysine residue, forming fibronectin-fibrinogen heteropolymers.</text>
</comment>
<proteinExistence type="evidence at protein level"/>
<reference key="1">
    <citation type="journal article" date="1965" name="Acta Chem. Scand.">
        <title>Studies on fibrinopeptides from mammals.</title>
        <authorList>
            <person name="Blombaeck B."/>
            <person name="Blombaeck M."/>
            <person name="Grondahl N.J."/>
        </authorList>
    </citation>
    <scope>PROTEIN SEQUENCE</scope>
    <scope>PHOSPHORYLATION AT SER-3</scope>
</reference>
<accession>P68212</accession>
<accession>P02673</accession>
<accession>P14464</accession>
<sequence>TNSKEGEFIAEGGGVR</sequence>
<keyword id="KW-1064">Adaptive immunity</keyword>
<keyword id="KW-0094">Blood coagulation</keyword>
<keyword id="KW-0175">Coiled coil</keyword>
<keyword id="KW-0903">Direct protein sequencing</keyword>
<keyword id="KW-1015">Disulfide bond</keyword>
<keyword id="KW-0356">Hemostasis</keyword>
<keyword id="KW-0391">Immunity</keyword>
<keyword id="KW-0399">Innate immunity</keyword>
<keyword id="KW-0597">Phosphoprotein</keyword>
<keyword id="KW-1185">Reference proteome</keyword>
<keyword id="KW-0964">Secreted</keyword>
<dbReference type="Proteomes" id="UP000286640">
    <property type="component" value="Unplaced"/>
</dbReference>
<dbReference type="GO" id="GO:0005576">
    <property type="term" value="C:extracellular region"/>
    <property type="evidence" value="ECO:0007669"/>
    <property type="project" value="UniProtKB-SubCell"/>
</dbReference>
<dbReference type="GO" id="GO:0002250">
    <property type="term" value="P:adaptive immune response"/>
    <property type="evidence" value="ECO:0007669"/>
    <property type="project" value="UniProtKB-KW"/>
</dbReference>
<dbReference type="GO" id="GO:0007596">
    <property type="term" value="P:blood coagulation"/>
    <property type="evidence" value="ECO:0007669"/>
    <property type="project" value="UniProtKB-KW"/>
</dbReference>
<dbReference type="GO" id="GO:0045087">
    <property type="term" value="P:innate immune response"/>
    <property type="evidence" value="ECO:0007669"/>
    <property type="project" value="UniProtKB-KW"/>
</dbReference>
<organism>
    <name type="scientific">Vulpes vulpes</name>
    <name type="common">Red fox</name>
    <dbReference type="NCBI Taxonomy" id="9627"/>
    <lineage>
        <taxon>Eukaryota</taxon>
        <taxon>Metazoa</taxon>
        <taxon>Chordata</taxon>
        <taxon>Craniata</taxon>
        <taxon>Vertebrata</taxon>
        <taxon>Euteleostomi</taxon>
        <taxon>Mammalia</taxon>
        <taxon>Eutheria</taxon>
        <taxon>Laurasiatheria</taxon>
        <taxon>Carnivora</taxon>
        <taxon>Caniformia</taxon>
        <taxon>Canidae</taxon>
        <taxon>Vulpes</taxon>
    </lineage>
</organism>
<name>FIBA_VULVU</name>
<feature type="peptide" id="PRO_0000009044" description="Fibrinopeptide A">
    <location>
        <begin position="1"/>
        <end position="16"/>
    </location>
</feature>
<feature type="modified residue" description="Phosphoserine" evidence="3">
    <location>
        <position position="3"/>
    </location>
</feature>
<feature type="sequence conflict" description="In Ref. 1; AA sequence." evidence="4" ref="1">
    <original>N</original>
    <variation>D</variation>
    <location>
        <position position="2"/>
    </location>
</feature>
<feature type="sequence conflict" description="In Ref. 1; AA sequence." evidence="4" ref="1">
    <original>KEGE</original>
    <variation>EGKQ</variation>
    <location>
        <begin position="4"/>
        <end position="7"/>
    </location>
</feature>
<feature type="non-terminal residue">
    <location>
        <position position="16"/>
    </location>
</feature>
<evidence type="ECO:0000250" key="1">
    <source>
        <dbReference type="UniProtKB" id="E9PV24"/>
    </source>
</evidence>
<evidence type="ECO:0000250" key="2">
    <source>
        <dbReference type="UniProtKB" id="P02671"/>
    </source>
</evidence>
<evidence type="ECO:0000269" key="3">
    <source ref="1"/>
</evidence>
<evidence type="ECO:0000305" key="4"/>